<proteinExistence type="evidence at transcript level"/>
<protein>
    <recommendedName>
        <fullName>Actin-like protein 9</fullName>
    </recommendedName>
</protein>
<accession>Q2T9W4</accession>
<name>ACTL9_BOVIN</name>
<comment type="function">
    <text evidence="1">Testis-specic protein that plays an important role in fusion of proacrosomal vesicles and perinuclear theca formation.</text>
</comment>
<comment type="subunit">
    <text evidence="1">Interacts with ACTL7A.</text>
</comment>
<comment type="subcellular location">
    <subcellularLocation>
        <location evidence="1">Cytoplasmic vesicle</location>
        <location evidence="1">Secretory vesicle</location>
        <location evidence="1">Acrosome</location>
    </subcellularLocation>
    <subcellularLocation>
        <location evidence="1">Cytoplasm</location>
        <location evidence="1">Cytoskeleton</location>
        <location evidence="1">Perinuclear theca</location>
    </subcellularLocation>
    <text evidence="1">Localizes predominantly in the equatorial segment of the sperm head and neck regions, with some localization in the acrosomal segment of the head. Colocalizes in the acrosomal and equatorial segments of sperm with ACTL7A. Colocalizes with PLCZ1 in the equatorial segment of the head of capacitated sperm.</text>
</comment>
<comment type="similarity">
    <text evidence="3">Belongs to the actin family.</text>
</comment>
<gene>
    <name type="primary">ACTL9</name>
    <name type="synonym">ACTL7C</name>
</gene>
<dbReference type="EMBL" id="BC111236">
    <property type="protein sequence ID" value="AAI11237.1"/>
    <property type="molecule type" value="mRNA"/>
</dbReference>
<dbReference type="RefSeq" id="NP_001033658.1">
    <property type="nucleotide sequence ID" value="NM_001038569.2"/>
</dbReference>
<dbReference type="SMR" id="Q2T9W4"/>
<dbReference type="FunCoup" id="Q2T9W4">
    <property type="interactions" value="50"/>
</dbReference>
<dbReference type="STRING" id="9913.ENSBTAP00000014947"/>
<dbReference type="PaxDb" id="9913-ENSBTAP00000014947"/>
<dbReference type="Ensembl" id="ENSBTAT00000014947.3">
    <property type="protein sequence ID" value="ENSBTAP00000014947.2"/>
    <property type="gene ID" value="ENSBTAG00000011255.3"/>
</dbReference>
<dbReference type="GeneID" id="540051"/>
<dbReference type="KEGG" id="bta:540051"/>
<dbReference type="CTD" id="284382"/>
<dbReference type="VEuPathDB" id="HostDB:ENSBTAG00000011255"/>
<dbReference type="VGNC" id="VGNC:25580">
    <property type="gene designation" value="ACTL9"/>
</dbReference>
<dbReference type="eggNOG" id="KOG0676">
    <property type="taxonomic scope" value="Eukaryota"/>
</dbReference>
<dbReference type="GeneTree" id="ENSGT00940000163012"/>
<dbReference type="HOGENOM" id="CLU_027965_0_2_1"/>
<dbReference type="InParanoid" id="Q2T9W4"/>
<dbReference type="OMA" id="HATERMD"/>
<dbReference type="OrthoDB" id="9932367at2759"/>
<dbReference type="TreeFam" id="TF354237"/>
<dbReference type="Proteomes" id="UP000009136">
    <property type="component" value="Chromosome 7"/>
</dbReference>
<dbReference type="Bgee" id="ENSBTAG00000011255">
    <property type="expression patterns" value="Expressed in spermatid and 9 other cell types or tissues"/>
</dbReference>
<dbReference type="GO" id="GO:0001669">
    <property type="term" value="C:acrosomal vesicle"/>
    <property type="evidence" value="ECO:0000250"/>
    <property type="project" value="UniProtKB"/>
</dbReference>
<dbReference type="GO" id="GO:0015629">
    <property type="term" value="C:actin cytoskeleton"/>
    <property type="evidence" value="ECO:0000318"/>
    <property type="project" value="GO_Central"/>
</dbReference>
<dbReference type="GO" id="GO:0033011">
    <property type="term" value="C:perinuclear theca"/>
    <property type="evidence" value="ECO:0000250"/>
    <property type="project" value="UniProtKB"/>
</dbReference>
<dbReference type="GO" id="GO:0061827">
    <property type="term" value="C:sperm head"/>
    <property type="evidence" value="ECO:0000250"/>
    <property type="project" value="UniProtKB"/>
</dbReference>
<dbReference type="GO" id="GO:0001675">
    <property type="term" value="P:acrosome assembly"/>
    <property type="evidence" value="ECO:0000250"/>
    <property type="project" value="UniProtKB"/>
</dbReference>
<dbReference type="GO" id="GO:0009566">
    <property type="term" value="P:fertilization"/>
    <property type="evidence" value="ECO:0000250"/>
    <property type="project" value="UniProtKB"/>
</dbReference>
<dbReference type="GO" id="GO:0007338">
    <property type="term" value="P:single fertilization"/>
    <property type="evidence" value="ECO:0007669"/>
    <property type="project" value="UniProtKB-KW"/>
</dbReference>
<dbReference type="FunFam" id="3.30.420.40:FF:000050">
    <property type="entry name" value="Actin, alpha skeletal muscle"/>
    <property type="match status" value="1"/>
</dbReference>
<dbReference type="Gene3D" id="3.30.420.40">
    <property type="match status" value="2"/>
</dbReference>
<dbReference type="Gene3D" id="3.90.640.10">
    <property type="entry name" value="Actin, Chain A, domain 4"/>
    <property type="match status" value="1"/>
</dbReference>
<dbReference type="InterPro" id="IPR004000">
    <property type="entry name" value="Actin"/>
</dbReference>
<dbReference type="InterPro" id="IPR043129">
    <property type="entry name" value="ATPase_NBD"/>
</dbReference>
<dbReference type="PANTHER" id="PTHR11937">
    <property type="entry name" value="ACTIN"/>
    <property type="match status" value="1"/>
</dbReference>
<dbReference type="Pfam" id="PF00022">
    <property type="entry name" value="Actin"/>
    <property type="match status" value="2"/>
</dbReference>
<dbReference type="PRINTS" id="PR00190">
    <property type="entry name" value="ACTIN"/>
</dbReference>
<dbReference type="SMART" id="SM00268">
    <property type="entry name" value="ACTIN"/>
    <property type="match status" value="1"/>
</dbReference>
<dbReference type="SUPFAM" id="SSF53067">
    <property type="entry name" value="Actin-like ATPase domain"/>
    <property type="match status" value="2"/>
</dbReference>
<feature type="chain" id="PRO_0000332296" description="Actin-like protein 9">
    <location>
        <begin position="1"/>
        <end position="416"/>
    </location>
</feature>
<feature type="region of interest" description="Disordered" evidence="2">
    <location>
        <begin position="1"/>
        <end position="23"/>
    </location>
</feature>
<organism>
    <name type="scientific">Bos taurus</name>
    <name type="common">Bovine</name>
    <dbReference type="NCBI Taxonomy" id="9913"/>
    <lineage>
        <taxon>Eukaryota</taxon>
        <taxon>Metazoa</taxon>
        <taxon>Chordata</taxon>
        <taxon>Craniata</taxon>
        <taxon>Vertebrata</taxon>
        <taxon>Euteleostomi</taxon>
        <taxon>Mammalia</taxon>
        <taxon>Eutheria</taxon>
        <taxon>Laurasiatheria</taxon>
        <taxon>Artiodactyla</taxon>
        <taxon>Ruminantia</taxon>
        <taxon>Pecora</taxon>
        <taxon>Bovidae</taxon>
        <taxon>Bovinae</taxon>
        <taxon>Bos</taxon>
    </lineage>
</organism>
<reference key="1">
    <citation type="submission" date="2005-12" db="EMBL/GenBank/DDBJ databases">
        <authorList>
            <consortium name="NIH - Mammalian Gene Collection (MGC) project"/>
        </authorList>
    </citation>
    <scope>NUCLEOTIDE SEQUENCE [LARGE SCALE MRNA]</scope>
    <source>
        <strain>Crossbred X Angus</strain>
        <tissue>Liver</tissue>
    </source>
</reference>
<evidence type="ECO:0000250" key="1">
    <source>
        <dbReference type="UniProtKB" id="Q8TC94"/>
    </source>
</evidence>
<evidence type="ECO:0000256" key="2">
    <source>
        <dbReference type="SAM" id="MobiDB-lite"/>
    </source>
</evidence>
<evidence type="ECO:0000305" key="3"/>
<keyword id="KW-0963">Cytoplasm</keyword>
<keyword id="KW-0968">Cytoplasmic vesicle</keyword>
<keyword id="KW-0206">Cytoskeleton</keyword>
<keyword id="KW-0278">Fertilization</keyword>
<keyword id="KW-1185">Reference proteome</keyword>
<sequence length="416" mass="45566">MDPNQGNPLEPQDSPEIPKPSLNLSSILAKSTLPQEPPSMVGDRLPPKTGAVVIDMGTGTCKVGFAGQARPTYTVATIVGCQPQKPATSGQPVMETFIGEAARKRPELTLVQPVHSGIVVDWDAAELIWRHMLEHDLRVATRDHPLLFSDPPFSPSTNREKLVEVAFESLSSPAMYVASQSVLSVYAHGRVSGLVVDTGHGVTYTVPVFQGYNLPHATQRLDLAGTHLTAFLAEMLLGSGLPLGQQDLDTVENIKHRYCYVAPDFLKEQARPELECRQTLKLPDGRTVTLGKELFQCPELLFSPPEIPGLSPVGVPTMAQQSLSKVAAELRTDLAQNVLLCGGSSLFTGFQARFQTELLRNLPPEAHVVVMAQPTRNFSVWIGGSILASLRTFQSCWVLREQYEEQGPYIVYRKCY</sequence>